<sequence>MTDKTSNQMWGGRFAAGPDAIMEAINASIGFDKRLAAQDIAGSRAHAAMLAATGVITDSDAEAIREGLLTVLSEIEAGEFTFSTALEDIHMNVEARLKEIIGEPAGRLHTARSRNDQVATDFKLWVRDQFDAAEAGLLALLRALLGQAEAGADWVMPGFTHLQTAQPVTWGHHMMAYVEMFGRDLSRVRDARARMNESPLGSAALAGTSFPIDRHMTAAALGFDRPTANSLDAVSDRDFALEFLSVASICAMHLSRFAEELVIWSSAQFRFVTLSDRFSTGSSIMPQKKNPDAAELIRAKVGRIFGANTALMMVMKGLPLAYSKDMQEDKEQVFDAADNWMLALAAMEGMVRDMTANRDSLAAAAGSGFSTATDLADWLVRVLGLPFRDAHHVTGALVALAESKGCDLPDLSLDEMQSAHAAITEDVYGVLGVENSVNSRQSYGGTAPAQVRAQVARWKEMLA</sequence>
<evidence type="ECO:0000255" key="1">
    <source>
        <dbReference type="HAMAP-Rule" id="MF_00006"/>
    </source>
</evidence>
<protein>
    <recommendedName>
        <fullName evidence="1">Argininosuccinate lyase</fullName>
        <shortName evidence="1">ASAL</shortName>
        <ecNumber evidence="1">4.3.2.1</ecNumber>
    </recommendedName>
    <alternativeName>
        <fullName evidence="1">Arginosuccinase</fullName>
    </alternativeName>
</protein>
<accession>Q5LXC0</accession>
<comment type="catalytic activity">
    <reaction evidence="1">
        <text>2-(N(omega)-L-arginino)succinate = fumarate + L-arginine</text>
        <dbReference type="Rhea" id="RHEA:24020"/>
        <dbReference type="ChEBI" id="CHEBI:29806"/>
        <dbReference type="ChEBI" id="CHEBI:32682"/>
        <dbReference type="ChEBI" id="CHEBI:57472"/>
        <dbReference type="EC" id="4.3.2.1"/>
    </reaction>
</comment>
<comment type="pathway">
    <text evidence="1">Amino-acid biosynthesis; L-arginine biosynthesis; L-arginine from L-ornithine and carbamoyl phosphate: step 3/3.</text>
</comment>
<comment type="subcellular location">
    <subcellularLocation>
        <location evidence="1">Cytoplasm</location>
    </subcellularLocation>
</comment>
<comment type="similarity">
    <text evidence="1">Belongs to the lyase 1 family. Argininosuccinate lyase subfamily.</text>
</comment>
<keyword id="KW-0028">Amino-acid biosynthesis</keyword>
<keyword id="KW-0055">Arginine biosynthesis</keyword>
<keyword id="KW-0963">Cytoplasm</keyword>
<keyword id="KW-0456">Lyase</keyword>
<keyword id="KW-1185">Reference proteome</keyword>
<reference key="1">
    <citation type="journal article" date="2004" name="Nature">
        <title>Genome sequence of Silicibacter pomeroyi reveals adaptations to the marine environment.</title>
        <authorList>
            <person name="Moran M.A."/>
            <person name="Buchan A."/>
            <person name="Gonzalez J.M."/>
            <person name="Heidelberg J.F."/>
            <person name="Whitman W.B."/>
            <person name="Kiene R.P."/>
            <person name="Henriksen J.R."/>
            <person name="King G.M."/>
            <person name="Belas R."/>
            <person name="Fuqua C."/>
            <person name="Brinkac L.M."/>
            <person name="Lewis M."/>
            <person name="Johri S."/>
            <person name="Weaver B."/>
            <person name="Pai G."/>
            <person name="Eisen J.A."/>
            <person name="Rahe E."/>
            <person name="Sheldon W.M."/>
            <person name="Ye W."/>
            <person name="Miller T.R."/>
            <person name="Carlton J."/>
            <person name="Rasko D.A."/>
            <person name="Paulsen I.T."/>
            <person name="Ren Q."/>
            <person name="Daugherty S.C."/>
            <person name="DeBoy R.T."/>
            <person name="Dodson R.J."/>
            <person name="Durkin A.S."/>
            <person name="Madupu R."/>
            <person name="Nelson W.C."/>
            <person name="Sullivan S.A."/>
            <person name="Rosovitz M.J."/>
            <person name="Haft D.H."/>
            <person name="Selengut J."/>
            <person name="Ward N."/>
        </authorList>
    </citation>
    <scope>NUCLEOTIDE SEQUENCE [LARGE SCALE GENOMIC DNA]</scope>
    <source>
        <strain>ATCC 700808 / DSM 15171 / DSS-3</strain>
    </source>
</reference>
<reference key="2">
    <citation type="journal article" date="2014" name="Stand. Genomic Sci.">
        <title>An updated genome annotation for the model marine bacterium Ruegeria pomeroyi DSS-3.</title>
        <authorList>
            <person name="Rivers A.R."/>
            <person name="Smith C.B."/>
            <person name="Moran M.A."/>
        </authorList>
    </citation>
    <scope>GENOME REANNOTATION</scope>
    <source>
        <strain>ATCC 700808 / DSM 15171 / DSS-3</strain>
    </source>
</reference>
<dbReference type="EC" id="4.3.2.1" evidence="1"/>
<dbReference type="EMBL" id="CP000031">
    <property type="protein sequence ID" value="AAV93650.1"/>
    <property type="molecule type" value="Genomic_DNA"/>
</dbReference>
<dbReference type="RefSeq" id="WP_011046093.1">
    <property type="nucleotide sequence ID" value="NC_003911.12"/>
</dbReference>
<dbReference type="SMR" id="Q5LXC0"/>
<dbReference type="STRING" id="246200.SPO0332"/>
<dbReference type="PaxDb" id="246200-SPO0332"/>
<dbReference type="KEGG" id="sil:SPO0332"/>
<dbReference type="eggNOG" id="COG0165">
    <property type="taxonomic scope" value="Bacteria"/>
</dbReference>
<dbReference type="HOGENOM" id="CLU_027272_2_3_5"/>
<dbReference type="OrthoDB" id="9769623at2"/>
<dbReference type="UniPathway" id="UPA00068">
    <property type="reaction ID" value="UER00114"/>
</dbReference>
<dbReference type="Proteomes" id="UP000001023">
    <property type="component" value="Chromosome"/>
</dbReference>
<dbReference type="GO" id="GO:0005829">
    <property type="term" value="C:cytosol"/>
    <property type="evidence" value="ECO:0007669"/>
    <property type="project" value="TreeGrafter"/>
</dbReference>
<dbReference type="GO" id="GO:0004056">
    <property type="term" value="F:argininosuccinate lyase activity"/>
    <property type="evidence" value="ECO:0007669"/>
    <property type="project" value="UniProtKB-UniRule"/>
</dbReference>
<dbReference type="GO" id="GO:0042450">
    <property type="term" value="P:arginine biosynthetic process via ornithine"/>
    <property type="evidence" value="ECO:0007669"/>
    <property type="project" value="InterPro"/>
</dbReference>
<dbReference type="GO" id="GO:0006526">
    <property type="term" value="P:L-arginine biosynthetic process"/>
    <property type="evidence" value="ECO:0007669"/>
    <property type="project" value="UniProtKB-UniRule"/>
</dbReference>
<dbReference type="CDD" id="cd01359">
    <property type="entry name" value="Argininosuccinate_lyase"/>
    <property type="match status" value="1"/>
</dbReference>
<dbReference type="FunFam" id="1.10.275.10:FF:000002">
    <property type="entry name" value="Argininosuccinate lyase"/>
    <property type="match status" value="1"/>
</dbReference>
<dbReference type="FunFam" id="1.10.40.30:FF:000001">
    <property type="entry name" value="Argininosuccinate lyase"/>
    <property type="match status" value="1"/>
</dbReference>
<dbReference type="FunFam" id="1.20.200.10:FF:000015">
    <property type="entry name" value="argininosuccinate lyase isoform X2"/>
    <property type="match status" value="1"/>
</dbReference>
<dbReference type="Gene3D" id="1.10.40.30">
    <property type="entry name" value="Fumarase/aspartase (C-terminal domain)"/>
    <property type="match status" value="1"/>
</dbReference>
<dbReference type="Gene3D" id="1.20.200.10">
    <property type="entry name" value="Fumarase/aspartase (Central domain)"/>
    <property type="match status" value="1"/>
</dbReference>
<dbReference type="Gene3D" id="1.10.275.10">
    <property type="entry name" value="Fumarase/aspartase (N-terminal domain)"/>
    <property type="match status" value="1"/>
</dbReference>
<dbReference type="HAMAP" id="MF_00006">
    <property type="entry name" value="Arg_succ_lyase"/>
    <property type="match status" value="1"/>
</dbReference>
<dbReference type="InterPro" id="IPR029419">
    <property type="entry name" value="Arg_succ_lyase_C"/>
</dbReference>
<dbReference type="InterPro" id="IPR009049">
    <property type="entry name" value="Argininosuccinate_lyase"/>
</dbReference>
<dbReference type="InterPro" id="IPR024083">
    <property type="entry name" value="Fumarase/histidase_N"/>
</dbReference>
<dbReference type="InterPro" id="IPR020557">
    <property type="entry name" value="Fumarate_lyase_CS"/>
</dbReference>
<dbReference type="InterPro" id="IPR000362">
    <property type="entry name" value="Fumarate_lyase_fam"/>
</dbReference>
<dbReference type="InterPro" id="IPR022761">
    <property type="entry name" value="Fumarate_lyase_N"/>
</dbReference>
<dbReference type="InterPro" id="IPR008948">
    <property type="entry name" value="L-Aspartase-like"/>
</dbReference>
<dbReference type="NCBIfam" id="TIGR00838">
    <property type="entry name" value="argH"/>
    <property type="match status" value="1"/>
</dbReference>
<dbReference type="PANTHER" id="PTHR43814">
    <property type="entry name" value="ARGININOSUCCINATE LYASE"/>
    <property type="match status" value="1"/>
</dbReference>
<dbReference type="PANTHER" id="PTHR43814:SF1">
    <property type="entry name" value="ARGININOSUCCINATE LYASE"/>
    <property type="match status" value="1"/>
</dbReference>
<dbReference type="Pfam" id="PF14698">
    <property type="entry name" value="ASL_C2"/>
    <property type="match status" value="1"/>
</dbReference>
<dbReference type="Pfam" id="PF00206">
    <property type="entry name" value="Lyase_1"/>
    <property type="match status" value="1"/>
</dbReference>
<dbReference type="PRINTS" id="PR00145">
    <property type="entry name" value="ARGSUCLYASE"/>
</dbReference>
<dbReference type="PRINTS" id="PR00149">
    <property type="entry name" value="FUMRATELYASE"/>
</dbReference>
<dbReference type="SUPFAM" id="SSF48557">
    <property type="entry name" value="L-aspartase-like"/>
    <property type="match status" value="1"/>
</dbReference>
<dbReference type="PROSITE" id="PS00163">
    <property type="entry name" value="FUMARATE_LYASES"/>
    <property type="match status" value="1"/>
</dbReference>
<gene>
    <name evidence="1" type="primary">argH</name>
    <name type="ordered locus">SPO0332</name>
</gene>
<name>ARLY_RUEPO</name>
<feature type="chain" id="PRO_0000240771" description="Argininosuccinate lyase">
    <location>
        <begin position="1"/>
        <end position="463"/>
    </location>
</feature>
<organism>
    <name type="scientific">Ruegeria pomeroyi (strain ATCC 700808 / DSM 15171 / DSS-3)</name>
    <name type="common">Silicibacter pomeroyi</name>
    <dbReference type="NCBI Taxonomy" id="246200"/>
    <lineage>
        <taxon>Bacteria</taxon>
        <taxon>Pseudomonadati</taxon>
        <taxon>Pseudomonadota</taxon>
        <taxon>Alphaproteobacteria</taxon>
        <taxon>Rhodobacterales</taxon>
        <taxon>Roseobacteraceae</taxon>
        <taxon>Ruegeria</taxon>
    </lineage>
</organism>
<proteinExistence type="inferred from homology"/>